<protein>
    <recommendedName>
        <fullName evidence="1">DNA primase DnaG</fullName>
        <ecNumber evidence="1">2.7.7.101</ecNumber>
    </recommendedName>
</protein>
<gene>
    <name evidence="1" type="primary">dnaG</name>
    <name type="ordered locus">rrnAC1720</name>
</gene>
<organism>
    <name type="scientific">Haloarcula marismortui (strain ATCC 43049 / DSM 3752 / JCM 8966 / VKM B-1809)</name>
    <name type="common">Halobacterium marismortui</name>
    <dbReference type="NCBI Taxonomy" id="272569"/>
    <lineage>
        <taxon>Archaea</taxon>
        <taxon>Methanobacteriati</taxon>
        <taxon>Methanobacteriota</taxon>
        <taxon>Stenosarchaea group</taxon>
        <taxon>Halobacteria</taxon>
        <taxon>Halobacteriales</taxon>
        <taxon>Haloarculaceae</taxon>
        <taxon>Haloarcula</taxon>
    </lineage>
</organism>
<comment type="function">
    <text evidence="1">RNA polymerase that catalyzes the synthesis of short RNA molecules used as primers for DNA polymerase during DNA replication.</text>
</comment>
<comment type="catalytic activity">
    <reaction evidence="1">
        <text>ssDNA + n NTP = ssDNA/pppN(pN)n-1 hybrid + (n-1) diphosphate.</text>
        <dbReference type="EC" id="2.7.7.101"/>
    </reaction>
</comment>
<comment type="cofactor">
    <cofactor evidence="1">
        <name>Mg(2+)</name>
        <dbReference type="ChEBI" id="CHEBI:18420"/>
    </cofactor>
    <text evidence="1">Binds two Mg(2+) per subunit.</text>
</comment>
<comment type="subunit">
    <text evidence="1">Forms a ternary complex with MCM helicase and DNA.</text>
</comment>
<comment type="similarity">
    <text evidence="1">Belongs to the archaeal DnaG primase family.</text>
</comment>
<sequence>MQDTAKYLIHADITAAGVVERSDVVGAVFGQTEGLLGDELDLRDLQDSKKVGRIDVEIRSEGGQSFGEITVASGLDRVETAILAAALETIEQVGPCRAEIEVSEIEDVRSAKRREVVERATELLNDFEEKSIQTADIVETVRQQVRVADVTDYEGLPAGPRVADSDAIVVVEGRSDVMQLLKYGIKNAVAVEGTDVPDAIADLTAGRTVTSFLDGDRGGDLILKELAQVGDVDYVAVTPSDKSVEDLSRSEVMSALRDKVPYETVASAKSLDSIREEMSQAGESTTADGGAVAAATSDDAADNQPSPSSQTGSAKVETTDGTTSVVDNSNATAVADATTDEETTENGDGPTIPSLSDHIEAVIQTHSGTARLVDEDATLLAEGDADAVVSLLESTEDVPKTVVIDADCSQKLLDVAAQRGVDVVVAAGHGEYVKQPTAVQVRIES</sequence>
<evidence type="ECO:0000255" key="1">
    <source>
        <dbReference type="HAMAP-Rule" id="MF_00007"/>
    </source>
</evidence>
<evidence type="ECO:0000256" key="2">
    <source>
        <dbReference type="SAM" id="MobiDB-lite"/>
    </source>
</evidence>
<keyword id="KW-0235">DNA replication</keyword>
<keyword id="KW-0240">DNA-directed RNA polymerase</keyword>
<keyword id="KW-0460">Magnesium</keyword>
<keyword id="KW-0479">Metal-binding</keyword>
<keyword id="KW-0548">Nucleotidyltransferase</keyword>
<keyword id="KW-0639">Primosome</keyword>
<keyword id="KW-1185">Reference proteome</keyword>
<keyword id="KW-0804">Transcription</keyword>
<keyword id="KW-0808">Transferase</keyword>
<accession>Q5V1H7</accession>
<feature type="chain" id="PRO_0000240454" description="DNA primase DnaG">
    <location>
        <begin position="1"/>
        <end position="445"/>
    </location>
</feature>
<feature type="domain" description="Toprim" evidence="1">
    <location>
        <begin position="166"/>
        <end position="252"/>
    </location>
</feature>
<feature type="region of interest" description="Disordered" evidence="2">
    <location>
        <begin position="276"/>
        <end position="355"/>
    </location>
</feature>
<feature type="compositionally biased region" description="Low complexity" evidence="2">
    <location>
        <begin position="284"/>
        <end position="298"/>
    </location>
</feature>
<feature type="compositionally biased region" description="Polar residues" evidence="2">
    <location>
        <begin position="303"/>
        <end position="313"/>
    </location>
</feature>
<feature type="compositionally biased region" description="Low complexity" evidence="2">
    <location>
        <begin position="324"/>
        <end position="337"/>
    </location>
</feature>
<feature type="binding site" evidence="1">
    <location>
        <position position="172"/>
    </location>
    <ligand>
        <name>Mg(2+)</name>
        <dbReference type="ChEBI" id="CHEBI:18420"/>
        <label>1</label>
        <note>catalytic</note>
    </ligand>
</feature>
<feature type="binding site" evidence="1">
    <location>
        <position position="214"/>
    </location>
    <ligand>
        <name>Mg(2+)</name>
        <dbReference type="ChEBI" id="CHEBI:18420"/>
        <label>1</label>
        <note>catalytic</note>
    </ligand>
</feature>
<feature type="binding site" evidence="1">
    <location>
        <position position="214"/>
    </location>
    <ligand>
        <name>Mg(2+)</name>
        <dbReference type="ChEBI" id="CHEBI:18420"/>
        <label>2</label>
    </ligand>
</feature>
<feature type="binding site" evidence="1">
    <location>
        <position position="216"/>
    </location>
    <ligand>
        <name>Mg(2+)</name>
        <dbReference type="ChEBI" id="CHEBI:18420"/>
        <label>2</label>
    </ligand>
</feature>
<dbReference type="EC" id="2.7.7.101" evidence="1"/>
<dbReference type="EMBL" id="AY596297">
    <property type="protein sequence ID" value="AAV46625.1"/>
    <property type="molecule type" value="Genomic_DNA"/>
</dbReference>
<dbReference type="RefSeq" id="WP_011223806.1">
    <property type="nucleotide sequence ID" value="NC_006396.1"/>
</dbReference>
<dbReference type="SMR" id="Q5V1H7"/>
<dbReference type="STRING" id="272569.rrnAC1720"/>
<dbReference type="PaxDb" id="272569-rrnAC1720"/>
<dbReference type="EnsemblBacteria" id="AAV46625">
    <property type="protein sequence ID" value="AAV46625"/>
    <property type="gene ID" value="rrnAC1720"/>
</dbReference>
<dbReference type="GeneID" id="40152680"/>
<dbReference type="KEGG" id="hma:rrnAC1720"/>
<dbReference type="PATRIC" id="fig|272569.17.peg.2403"/>
<dbReference type="eggNOG" id="arCOG04281">
    <property type="taxonomic scope" value="Archaea"/>
</dbReference>
<dbReference type="HOGENOM" id="CLU_034626_0_0_2"/>
<dbReference type="Proteomes" id="UP000001169">
    <property type="component" value="Chromosome I"/>
</dbReference>
<dbReference type="GO" id="GO:0005737">
    <property type="term" value="C:cytoplasm"/>
    <property type="evidence" value="ECO:0007669"/>
    <property type="project" value="TreeGrafter"/>
</dbReference>
<dbReference type="GO" id="GO:0000428">
    <property type="term" value="C:DNA-directed RNA polymerase complex"/>
    <property type="evidence" value="ECO:0007669"/>
    <property type="project" value="UniProtKB-KW"/>
</dbReference>
<dbReference type="GO" id="GO:0000178">
    <property type="term" value="C:exosome (RNase complex)"/>
    <property type="evidence" value="ECO:0007669"/>
    <property type="project" value="InterPro"/>
</dbReference>
<dbReference type="GO" id="GO:1990077">
    <property type="term" value="C:primosome complex"/>
    <property type="evidence" value="ECO:0007669"/>
    <property type="project" value="UniProtKB-KW"/>
</dbReference>
<dbReference type="GO" id="GO:0003899">
    <property type="term" value="F:DNA-directed RNA polymerase activity"/>
    <property type="evidence" value="ECO:0007669"/>
    <property type="project" value="InterPro"/>
</dbReference>
<dbReference type="GO" id="GO:0046872">
    <property type="term" value="F:metal ion binding"/>
    <property type="evidence" value="ECO:0007669"/>
    <property type="project" value="UniProtKB-KW"/>
</dbReference>
<dbReference type="GO" id="GO:0008143">
    <property type="term" value="F:poly(A) binding"/>
    <property type="evidence" value="ECO:0007669"/>
    <property type="project" value="InterPro"/>
</dbReference>
<dbReference type="GO" id="GO:0006269">
    <property type="term" value="P:DNA replication, synthesis of primer"/>
    <property type="evidence" value="ECO:0007669"/>
    <property type="project" value="UniProtKB-UniRule"/>
</dbReference>
<dbReference type="CDD" id="cd01029">
    <property type="entry name" value="TOPRIM_primases"/>
    <property type="match status" value="1"/>
</dbReference>
<dbReference type="Gene3D" id="3.40.1360.10">
    <property type="match status" value="1"/>
</dbReference>
<dbReference type="HAMAP" id="MF_00007">
    <property type="entry name" value="DNA_primase_DnaG_arc"/>
    <property type="match status" value="1"/>
</dbReference>
<dbReference type="InterPro" id="IPR050219">
    <property type="entry name" value="DnaG_primase"/>
</dbReference>
<dbReference type="InterPro" id="IPR020607">
    <property type="entry name" value="Primase_DnaG_arc"/>
</dbReference>
<dbReference type="InterPro" id="IPR034154">
    <property type="entry name" value="TOPRIM_DnaG/twinkle"/>
</dbReference>
<dbReference type="InterPro" id="IPR006171">
    <property type="entry name" value="TOPRIM_dom"/>
</dbReference>
<dbReference type="NCBIfam" id="NF003108">
    <property type="entry name" value="PRK04031.1-1"/>
    <property type="match status" value="1"/>
</dbReference>
<dbReference type="PANTHER" id="PTHR30313">
    <property type="entry name" value="DNA PRIMASE"/>
    <property type="match status" value="1"/>
</dbReference>
<dbReference type="PANTHER" id="PTHR30313:SF2">
    <property type="entry name" value="DNA PRIMASE"/>
    <property type="match status" value="1"/>
</dbReference>
<dbReference type="Pfam" id="PF13662">
    <property type="entry name" value="Toprim_4"/>
    <property type="match status" value="1"/>
</dbReference>
<dbReference type="SMART" id="SM00493">
    <property type="entry name" value="TOPRIM"/>
    <property type="match status" value="1"/>
</dbReference>
<dbReference type="SUPFAM" id="SSF56731">
    <property type="entry name" value="DNA primase core"/>
    <property type="match status" value="1"/>
</dbReference>
<dbReference type="PROSITE" id="PS50880">
    <property type="entry name" value="TOPRIM"/>
    <property type="match status" value="1"/>
</dbReference>
<reference key="1">
    <citation type="journal article" date="2004" name="Genome Res.">
        <title>Genome sequence of Haloarcula marismortui: a halophilic archaeon from the Dead Sea.</title>
        <authorList>
            <person name="Baliga N.S."/>
            <person name="Bonneau R."/>
            <person name="Facciotti M.T."/>
            <person name="Pan M."/>
            <person name="Glusman G."/>
            <person name="Deutsch E.W."/>
            <person name="Shannon P."/>
            <person name="Chiu Y."/>
            <person name="Weng R.S."/>
            <person name="Gan R.R."/>
            <person name="Hung P."/>
            <person name="Date S.V."/>
            <person name="Marcotte E."/>
            <person name="Hood L."/>
            <person name="Ng W.V."/>
        </authorList>
    </citation>
    <scope>NUCLEOTIDE SEQUENCE [LARGE SCALE GENOMIC DNA]</scope>
    <source>
        <strain>ATCC 43049 / DSM 3752 / JCM 8966 / VKM B-1809</strain>
    </source>
</reference>
<name>DNAG_HALMA</name>
<proteinExistence type="inferred from homology"/>